<protein>
    <recommendedName>
        <fullName>UPF0758 protein NMA1448</fullName>
    </recommendedName>
</protein>
<gene>
    <name type="ordered locus">NMA1448</name>
</gene>
<proteinExistence type="inferred from homology"/>
<reference key="1">
    <citation type="journal article" date="2000" name="Nature">
        <title>Complete DNA sequence of a serogroup A strain of Neisseria meningitidis Z2491.</title>
        <authorList>
            <person name="Parkhill J."/>
            <person name="Achtman M."/>
            <person name="James K.D."/>
            <person name="Bentley S.D."/>
            <person name="Churcher C.M."/>
            <person name="Klee S.R."/>
            <person name="Morelli G."/>
            <person name="Basham D."/>
            <person name="Brown D."/>
            <person name="Chillingworth T."/>
            <person name="Davies R.M."/>
            <person name="Davis P."/>
            <person name="Devlin K."/>
            <person name="Feltwell T."/>
            <person name="Hamlin N."/>
            <person name="Holroyd S."/>
            <person name="Jagels K."/>
            <person name="Leather S."/>
            <person name="Moule S."/>
            <person name="Mungall K.L."/>
            <person name="Quail M.A."/>
            <person name="Rajandream M.A."/>
            <person name="Rutherford K.M."/>
            <person name="Simmonds M."/>
            <person name="Skelton J."/>
            <person name="Whitehead S."/>
            <person name="Spratt B.G."/>
            <person name="Barrell B.G."/>
        </authorList>
    </citation>
    <scope>NUCLEOTIDE SEQUENCE [LARGE SCALE GENOMIC DNA]</scope>
    <source>
        <strain>DSM 15465 / Z2491</strain>
    </source>
</reference>
<dbReference type="EMBL" id="AL157959">
    <property type="protein sequence ID" value="CAM08606.1"/>
    <property type="molecule type" value="Genomic_DNA"/>
</dbReference>
<dbReference type="PIR" id="G81835">
    <property type="entry name" value="G81835"/>
</dbReference>
<dbReference type="RefSeq" id="WP_002222553.1">
    <property type="nucleotide sequence ID" value="NC_003116.1"/>
</dbReference>
<dbReference type="SMR" id="Q9JU84"/>
<dbReference type="EnsemblBacteria" id="CAM08606">
    <property type="protein sequence ID" value="CAM08606"/>
    <property type="gene ID" value="NMA1448"/>
</dbReference>
<dbReference type="KEGG" id="nma:NMA1448"/>
<dbReference type="HOGENOM" id="CLU_073529_0_1_4"/>
<dbReference type="Proteomes" id="UP000000626">
    <property type="component" value="Chromosome"/>
</dbReference>
<dbReference type="GO" id="GO:0046872">
    <property type="term" value="F:metal ion binding"/>
    <property type="evidence" value="ECO:0007669"/>
    <property type="project" value="UniProtKB-KW"/>
</dbReference>
<dbReference type="GO" id="GO:0008237">
    <property type="term" value="F:metallopeptidase activity"/>
    <property type="evidence" value="ECO:0007669"/>
    <property type="project" value="UniProtKB-KW"/>
</dbReference>
<dbReference type="GO" id="GO:0006508">
    <property type="term" value="P:proteolysis"/>
    <property type="evidence" value="ECO:0007669"/>
    <property type="project" value="UniProtKB-KW"/>
</dbReference>
<dbReference type="CDD" id="cd08071">
    <property type="entry name" value="MPN_DUF2466"/>
    <property type="match status" value="1"/>
</dbReference>
<dbReference type="Gene3D" id="3.40.140.10">
    <property type="entry name" value="Cytidine Deaminase, domain 2"/>
    <property type="match status" value="1"/>
</dbReference>
<dbReference type="InterPro" id="IPR037518">
    <property type="entry name" value="MPN"/>
</dbReference>
<dbReference type="InterPro" id="IPR025657">
    <property type="entry name" value="RadC_JAB"/>
</dbReference>
<dbReference type="InterPro" id="IPR010994">
    <property type="entry name" value="RuvA_2-like"/>
</dbReference>
<dbReference type="InterPro" id="IPR001405">
    <property type="entry name" value="UPF0758"/>
</dbReference>
<dbReference type="InterPro" id="IPR046778">
    <property type="entry name" value="UPF0758_N"/>
</dbReference>
<dbReference type="NCBIfam" id="NF000642">
    <property type="entry name" value="PRK00024.1"/>
    <property type="match status" value="1"/>
</dbReference>
<dbReference type="NCBIfam" id="TIGR00608">
    <property type="entry name" value="radc"/>
    <property type="match status" value="1"/>
</dbReference>
<dbReference type="PANTHER" id="PTHR30471">
    <property type="entry name" value="DNA REPAIR PROTEIN RADC"/>
    <property type="match status" value="1"/>
</dbReference>
<dbReference type="PANTHER" id="PTHR30471:SF3">
    <property type="entry name" value="UPF0758 PROTEIN YEES-RELATED"/>
    <property type="match status" value="1"/>
</dbReference>
<dbReference type="Pfam" id="PF04002">
    <property type="entry name" value="RadC"/>
    <property type="match status" value="1"/>
</dbReference>
<dbReference type="Pfam" id="PF20582">
    <property type="entry name" value="UPF0758_N"/>
    <property type="match status" value="1"/>
</dbReference>
<dbReference type="SUPFAM" id="SSF102712">
    <property type="entry name" value="JAB1/MPN domain"/>
    <property type="match status" value="1"/>
</dbReference>
<dbReference type="SUPFAM" id="SSF47781">
    <property type="entry name" value="RuvA domain 2-like"/>
    <property type="match status" value="1"/>
</dbReference>
<dbReference type="PROSITE" id="PS50249">
    <property type="entry name" value="MPN"/>
    <property type="match status" value="1"/>
</dbReference>
<keyword id="KW-0378">Hydrolase</keyword>
<keyword id="KW-0479">Metal-binding</keyword>
<keyword id="KW-0482">Metalloprotease</keyword>
<keyword id="KW-0645">Protease</keyword>
<keyword id="KW-0862">Zinc</keyword>
<organism>
    <name type="scientific">Neisseria meningitidis serogroup A / serotype 4A (strain DSM 15465 / Z2491)</name>
    <dbReference type="NCBI Taxonomy" id="122587"/>
    <lineage>
        <taxon>Bacteria</taxon>
        <taxon>Pseudomonadati</taxon>
        <taxon>Pseudomonadota</taxon>
        <taxon>Betaproteobacteria</taxon>
        <taxon>Neisseriales</taxon>
        <taxon>Neisseriaceae</taxon>
        <taxon>Neisseria</taxon>
    </lineage>
</organism>
<comment type="similarity">
    <text evidence="2">Belongs to the UPF0758 family.</text>
</comment>
<sequence>MSIKQWPEGERPREKLLERGAAALSDAELLAILLRVGTRGMSAVDLARYLLQEFGSLGRLMSAEVGKLSAYKGMGTASFTQFAVVREIGRRILAEELQESIVLSDPDTVADYLRFHLGQEKVEVSVALLLNRQNQLIAVRELSRGTVAENTIYIREIVKLALDEYADSLIIAHNHPGGSPEPSQEDIMFTRRLAQAMSLVDVSLLDHFIVTAQTVRSFRQLGLMP</sequence>
<feature type="chain" id="PRO_0000190711" description="UPF0758 protein NMA1448">
    <location>
        <begin position="1"/>
        <end position="225"/>
    </location>
</feature>
<feature type="domain" description="MPN" evidence="1">
    <location>
        <begin position="102"/>
        <end position="224"/>
    </location>
</feature>
<feature type="short sequence motif" description="JAMM motif" evidence="1">
    <location>
        <begin position="173"/>
        <end position="186"/>
    </location>
</feature>
<feature type="binding site" evidence="1">
    <location>
        <position position="173"/>
    </location>
    <ligand>
        <name>Zn(2+)</name>
        <dbReference type="ChEBI" id="CHEBI:29105"/>
        <note>catalytic</note>
    </ligand>
</feature>
<feature type="binding site" evidence="1">
    <location>
        <position position="175"/>
    </location>
    <ligand>
        <name>Zn(2+)</name>
        <dbReference type="ChEBI" id="CHEBI:29105"/>
        <note>catalytic</note>
    </ligand>
</feature>
<feature type="binding site" evidence="1">
    <location>
        <position position="186"/>
    </location>
    <ligand>
        <name>Zn(2+)</name>
        <dbReference type="ChEBI" id="CHEBI:29105"/>
        <note>catalytic</note>
    </ligand>
</feature>
<evidence type="ECO:0000255" key="1">
    <source>
        <dbReference type="PROSITE-ProRule" id="PRU01182"/>
    </source>
</evidence>
<evidence type="ECO:0000305" key="2"/>
<accession>Q9JU84</accession>
<accession>A1IS53</accession>
<name>Y1448_NEIMA</name>